<reference key="1">
    <citation type="journal article" date="2002" name="Nature">
        <title>The genome sequence of Schizosaccharomyces pombe.</title>
        <authorList>
            <person name="Wood V."/>
            <person name="Gwilliam R."/>
            <person name="Rajandream M.A."/>
            <person name="Lyne M.H."/>
            <person name="Lyne R."/>
            <person name="Stewart A."/>
            <person name="Sgouros J.G."/>
            <person name="Peat N."/>
            <person name="Hayles J."/>
            <person name="Baker S.G."/>
            <person name="Basham D."/>
            <person name="Bowman S."/>
            <person name="Brooks K."/>
            <person name="Brown D."/>
            <person name="Brown S."/>
            <person name="Chillingworth T."/>
            <person name="Churcher C.M."/>
            <person name="Collins M."/>
            <person name="Connor R."/>
            <person name="Cronin A."/>
            <person name="Davis P."/>
            <person name="Feltwell T."/>
            <person name="Fraser A."/>
            <person name="Gentles S."/>
            <person name="Goble A."/>
            <person name="Hamlin N."/>
            <person name="Harris D.E."/>
            <person name="Hidalgo J."/>
            <person name="Hodgson G."/>
            <person name="Holroyd S."/>
            <person name="Hornsby T."/>
            <person name="Howarth S."/>
            <person name="Huckle E.J."/>
            <person name="Hunt S."/>
            <person name="Jagels K."/>
            <person name="James K.D."/>
            <person name="Jones L."/>
            <person name="Jones M."/>
            <person name="Leather S."/>
            <person name="McDonald S."/>
            <person name="McLean J."/>
            <person name="Mooney P."/>
            <person name="Moule S."/>
            <person name="Mungall K.L."/>
            <person name="Murphy L.D."/>
            <person name="Niblett D."/>
            <person name="Odell C."/>
            <person name="Oliver K."/>
            <person name="O'Neil S."/>
            <person name="Pearson D."/>
            <person name="Quail M.A."/>
            <person name="Rabbinowitsch E."/>
            <person name="Rutherford K.M."/>
            <person name="Rutter S."/>
            <person name="Saunders D."/>
            <person name="Seeger K."/>
            <person name="Sharp S."/>
            <person name="Skelton J."/>
            <person name="Simmonds M.N."/>
            <person name="Squares R."/>
            <person name="Squares S."/>
            <person name="Stevens K."/>
            <person name="Taylor K."/>
            <person name="Taylor R.G."/>
            <person name="Tivey A."/>
            <person name="Walsh S.V."/>
            <person name="Warren T."/>
            <person name="Whitehead S."/>
            <person name="Woodward J.R."/>
            <person name="Volckaert G."/>
            <person name="Aert R."/>
            <person name="Robben J."/>
            <person name="Grymonprez B."/>
            <person name="Weltjens I."/>
            <person name="Vanstreels E."/>
            <person name="Rieger M."/>
            <person name="Schaefer M."/>
            <person name="Mueller-Auer S."/>
            <person name="Gabel C."/>
            <person name="Fuchs M."/>
            <person name="Duesterhoeft A."/>
            <person name="Fritzc C."/>
            <person name="Holzer E."/>
            <person name="Moestl D."/>
            <person name="Hilbert H."/>
            <person name="Borzym K."/>
            <person name="Langer I."/>
            <person name="Beck A."/>
            <person name="Lehrach H."/>
            <person name="Reinhardt R."/>
            <person name="Pohl T.M."/>
            <person name="Eger P."/>
            <person name="Zimmermann W."/>
            <person name="Wedler H."/>
            <person name="Wambutt R."/>
            <person name="Purnelle B."/>
            <person name="Goffeau A."/>
            <person name="Cadieu E."/>
            <person name="Dreano S."/>
            <person name="Gloux S."/>
            <person name="Lelaure V."/>
            <person name="Mottier S."/>
            <person name="Galibert F."/>
            <person name="Aves S.J."/>
            <person name="Xiang Z."/>
            <person name="Hunt C."/>
            <person name="Moore K."/>
            <person name="Hurst S.M."/>
            <person name="Lucas M."/>
            <person name="Rochet M."/>
            <person name="Gaillardin C."/>
            <person name="Tallada V.A."/>
            <person name="Garzon A."/>
            <person name="Thode G."/>
            <person name="Daga R.R."/>
            <person name="Cruzado L."/>
            <person name="Jimenez J."/>
            <person name="Sanchez M."/>
            <person name="del Rey F."/>
            <person name="Benito J."/>
            <person name="Dominguez A."/>
            <person name="Revuelta J.L."/>
            <person name="Moreno S."/>
            <person name="Armstrong J."/>
            <person name="Forsburg S.L."/>
            <person name="Cerutti L."/>
            <person name="Lowe T."/>
            <person name="McCombie W.R."/>
            <person name="Paulsen I."/>
            <person name="Potashkin J."/>
            <person name="Shpakovski G.V."/>
            <person name="Ussery D."/>
            <person name="Barrell B.G."/>
            <person name="Nurse P."/>
        </authorList>
    </citation>
    <scope>NUCLEOTIDE SEQUENCE [LARGE SCALE GENOMIC DNA]</scope>
    <source>
        <strain>972 / ATCC 24843</strain>
    </source>
</reference>
<reference key="2">
    <citation type="journal article" date="2006" name="Nat. Biotechnol.">
        <title>ORFeome cloning and global analysis of protein localization in the fission yeast Schizosaccharomyces pombe.</title>
        <authorList>
            <person name="Matsuyama A."/>
            <person name="Arai R."/>
            <person name="Yashiroda Y."/>
            <person name="Shirai A."/>
            <person name="Kamata A."/>
            <person name="Sekido S."/>
            <person name="Kobayashi Y."/>
            <person name="Hashimoto A."/>
            <person name="Hamamoto M."/>
            <person name="Hiraoka Y."/>
            <person name="Horinouchi S."/>
            <person name="Yoshida M."/>
        </authorList>
    </citation>
    <scope>SUBCELLULAR LOCATION [LARGE SCALE ANALYSIS]</scope>
</reference>
<dbReference type="EC" id="2.3.2.27" evidence="1"/>
<dbReference type="EMBL" id="CU329671">
    <property type="protein sequence ID" value="CAB53729.1"/>
    <property type="molecule type" value="Genomic_DNA"/>
</dbReference>
<dbReference type="PIR" id="T39270">
    <property type="entry name" value="T39270"/>
</dbReference>
<dbReference type="RefSeq" id="NP_595162.1">
    <property type="nucleotide sequence ID" value="NM_001021071.2"/>
</dbReference>
<dbReference type="SMR" id="Q9URU9"/>
<dbReference type="BioGRID" id="276706">
    <property type="interactions" value="34"/>
</dbReference>
<dbReference type="FunCoup" id="Q9URU9">
    <property type="interactions" value="503"/>
</dbReference>
<dbReference type="STRING" id="284812.Q9URU9"/>
<dbReference type="PaxDb" id="4896-SPBC106.13.1"/>
<dbReference type="EnsemblFungi" id="SPBC106.13.1">
    <property type="protein sequence ID" value="SPBC106.13.1:pep"/>
    <property type="gene ID" value="SPBC106.13"/>
</dbReference>
<dbReference type="GeneID" id="2540173"/>
<dbReference type="KEGG" id="spo:2540173"/>
<dbReference type="PomBase" id="SPBC106.13">
    <property type="gene designation" value="gid9"/>
</dbReference>
<dbReference type="VEuPathDB" id="FungiDB:SPBC106.13"/>
<dbReference type="eggNOG" id="KOG0396">
    <property type="taxonomic scope" value="Eukaryota"/>
</dbReference>
<dbReference type="HOGENOM" id="CLU_027445_2_0_1"/>
<dbReference type="InParanoid" id="Q9URU9"/>
<dbReference type="OMA" id="ANHETAR"/>
<dbReference type="PhylomeDB" id="Q9URU9"/>
<dbReference type="Reactome" id="R-SPO-9861718">
    <property type="pathway name" value="Regulation of pyruvate metabolism"/>
</dbReference>
<dbReference type="UniPathway" id="UPA00143"/>
<dbReference type="PRO" id="PR:Q9URU9"/>
<dbReference type="Proteomes" id="UP000002485">
    <property type="component" value="Chromosome II"/>
</dbReference>
<dbReference type="GO" id="GO:0005737">
    <property type="term" value="C:cytoplasm"/>
    <property type="evidence" value="ECO:0007005"/>
    <property type="project" value="PomBase"/>
</dbReference>
<dbReference type="GO" id="GO:0005829">
    <property type="term" value="C:cytosol"/>
    <property type="evidence" value="ECO:0007005"/>
    <property type="project" value="PomBase"/>
</dbReference>
<dbReference type="GO" id="GO:0034657">
    <property type="term" value="C:GID complex"/>
    <property type="evidence" value="ECO:0000318"/>
    <property type="project" value="GO_Central"/>
</dbReference>
<dbReference type="GO" id="GO:0005634">
    <property type="term" value="C:nucleus"/>
    <property type="evidence" value="ECO:0007005"/>
    <property type="project" value="PomBase"/>
</dbReference>
<dbReference type="GO" id="GO:0061630">
    <property type="term" value="F:ubiquitin protein ligase activity"/>
    <property type="evidence" value="ECO:0007669"/>
    <property type="project" value="InterPro"/>
</dbReference>
<dbReference type="GO" id="GO:0008270">
    <property type="term" value="F:zinc ion binding"/>
    <property type="evidence" value="ECO:0007669"/>
    <property type="project" value="UniProtKB-KW"/>
</dbReference>
<dbReference type="GO" id="GO:0045721">
    <property type="term" value="P:negative regulation of gluconeogenesis"/>
    <property type="evidence" value="ECO:0000266"/>
    <property type="project" value="PomBase"/>
</dbReference>
<dbReference type="GO" id="GO:0043161">
    <property type="term" value="P:proteasome-mediated ubiquitin-dependent protein catabolic process"/>
    <property type="evidence" value="ECO:0000318"/>
    <property type="project" value="GO_Central"/>
</dbReference>
<dbReference type="CDD" id="cd16659">
    <property type="entry name" value="RING-Ubox_Emp"/>
    <property type="match status" value="1"/>
</dbReference>
<dbReference type="InterPro" id="IPR013144">
    <property type="entry name" value="CRA_dom"/>
</dbReference>
<dbReference type="InterPro" id="IPR024964">
    <property type="entry name" value="CTLH/CRA"/>
</dbReference>
<dbReference type="InterPro" id="IPR006595">
    <property type="entry name" value="CTLH_C"/>
</dbReference>
<dbReference type="InterPro" id="IPR045098">
    <property type="entry name" value="Fyv10_fam"/>
</dbReference>
<dbReference type="InterPro" id="IPR006594">
    <property type="entry name" value="LisH"/>
</dbReference>
<dbReference type="InterPro" id="IPR044063">
    <property type="entry name" value="ZF_RING_GID"/>
</dbReference>
<dbReference type="PANTHER" id="PTHR12170:SF2">
    <property type="entry name" value="E3 UBIQUITIN-PROTEIN TRANSFERASE MAEA"/>
    <property type="match status" value="1"/>
</dbReference>
<dbReference type="PANTHER" id="PTHR12170">
    <property type="entry name" value="MACROPHAGE ERYTHROBLAST ATTACHER-RELATED"/>
    <property type="match status" value="1"/>
</dbReference>
<dbReference type="Pfam" id="PF10607">
    <property type="entry name" value="CTLH"/>
    <property type="match status" value="1"/>
</dbReference>
<dbReference type="Pfam" id="PF08513">
    <property type="entry name" value="LisH"/>
    <property type="match status" value="1"/>
</dbReference>
<dbReference type="SMART" id="SM00757">
    <property type="entry name" value="CRA"/>
    <property type="match status" value="1"/>
</dbReference>
<dbReference type="SMART" id="SM00668">
    <property type="entry name" value="CTLH"/>
    <property type="match status" value="1"/>
</dbReference>
<dbReference type="SMART" id="SM00667">
    <property type="entry name" value="LisH"/>
    <property type="match status" value="1"/>
</dbReference>
<dbReference type="PROSITE" id="PS50897">
    <property type="entry name" value="CTLH"/>
    <property type="match status" value="1"/>
</dbReference>
<dbReference type="PROSITE" id="PS50896">
    <property type="entry name" value="LISH"/>
    <property type="match status" value="1"/>
</dbReference>
<dbReference type="PROSITE" id="PS51867">
    <property type="entry name" value="ZF_RING_GID"/>
    <property type="match status" value="1"/>
</dbReference>
<name>GID9_SCHPO</name>
<gene>
    <name type="primary">gid9</name>
    <name evidence="7" type="ORF">SPBC106.13</name>
</gene>
<accession>Q9URU9</accession>
<comment type="function">
    <text evidence="1">Component of the GID E3 ligase complex recruiting N termini and catalyzing ubiquitination of proteins targeted for degradation. GID E3 is regulated through assembly with interchangeable N-degron-binding substrate receptors induced by distinct environmental perturbations. Required for the adaptation to the presence of glucose in the growth medium; mediates in association with the substrate receptor VID24/GID4 the degradation of enzymes involved in gluconeogenesis when cells are shifted to glucose-containing medium.</text>
</comment>
<comment type="catalytic activity">
    <reaction evidence="1">
        <text>S-ubiquitinyl-[E2 ubiquitin-conjugating enzyme]-L-cysteine + [acceptor protein]-L-lysine = [E2 ubiquitin-conjugating enzyme]-L-cysteine + N(6)-ubiquitinyl-[acceptor protein]-L-lysine.</text>
        <dbReference type="EC" id="2.3.2.27"/>
    </reaction>
</comment>
<comment type="pathway">
    <text evidence="1">Protein modification; protein ubiquitination.</text>
</comment>
<comment type="subunit">
    <text evidence="1">Identified in the GID/CTLH complex. In the absence of stress, the complex exists as an inactive anticipatory complex (GID(Ant)), composed of Gid1, the E3 ubiquitin-ligase Gid2, Gid5, Gid8, and the RING-like subunit Gid9, awaiting a substrate receptor to form the active E3 ligase complex. When cells are shifted to glucose-containing medium, the substrate receptor Gid4 is induced and becomes part of the complex, named GID(SR4). Additionally, Gid7 transforms the GID(SR4) E3 ligase core into a higher-order supramolecular assembly (Chelator-GID(SR4)). Under osmotic or heat stress, the substrate receptor Gid10 is induced and becomes part of the complex, named GID(SR10).</text>
</comment>
<comment type="subcellular location">
    <subcellularLocation>
        <location evidence="5">Cytoplasm</location>
    </subcellularLocation>
    <subcellularLocation>
        <location evidence="5">Nucleus</location>
    </subcellularLocation>
</comment>
<comment type="similarity">
    <text evidence="6">Belongs to the FYV10 family.</text>
</comment>
<keyword id="KW-0963">Cytoplasm</keyword>
<keyword id="KW-0479">Metal-binding</keyword>
<keyword id="KW-0539">Nucleus</keyword>
<keyword id="KW-1185">Reference proteome</keyword>
<keyword id="KW-0808">Transferase</keyword>
<keyword id="KW-0833">Ubl conjugation pathway</keyword>
<keyword id="KW-0862">Zinc</keyword>
<keyword id="KW-0863">Zinc-finger</keyword>
<protein>
    <recommendedName>
        <fullName>GID complex subunit 9</fullName>
        <ecNumber evidence="1">2.3.2.27</ecNumber>
    </recommendedName>
    <alternativeName>
        <fullName>Glucose-induced degradation protein 9</fullName>
    </alternativeName>
    <alternativeName>
        <fullName>Probable E3 ubiquitin-protein ligase Gid9</fullName>
    </alternativeName>
</protein>
<evidence type="ECO:0000250" key="1">
    <source>
        <dbReference type="UniProtKB" id="P40492"/>
    </source>
</evidence>
<evidence type="ECO:0000255" key="2">
    <source>
        <dbReference type="PROSITE-ProRule" id="PRU00058"/>
    </source>
</evidence>
<evidence type="ECO:0000255" key="3">
    <source>
        <dbReference type="PROSITE-ProRule" id="PRU00126"/>
    </source>
</evidence>
<evidence type="ECO:0000255" key="4">
    <source>
        <dbReference type="PROSITE-ProRule" id="PRU01215"/>
    </source>
</evidence>
<evidence type="ECO:0000269" key="5">
    <source>
    </source>
</evidence>
<evidence type="ECO:0000305" key="6"/>
<evidence type="ECO:0000312" key="7">
    <source>
        <dbReference type="PomBase" id="SPBC106.13"/>
    </source>
</evidence>
<feature type="chain" id="PRO_0000292466" description="GID complex subunit 9">
    <location>
        <begin position="1"/>
        <end position="404"/>
    </location>
</feature>
<feature type="domain" description="LisH" evidence="3">
    <location>
        <begin position="116"/>
        <end position="148"/>
    </location>
</feature>
<feature type="domain" description="CTLH" evidence="2">
    <location>
        <begin position="154"/>
        <end position="211"/>
    </location>
</feature>
<feature type="zinc finger region" description="RING-Gid-type" evidence="4">
    <location>
        <begin position="317"/>
        <end position="389"/>
    </location>
</feature>
<sequence>MNFRPEQQYILEKPGILLSFEQLRINFKHILRHLEHESHVINSTLTTLISQENASMDEKIEKIDSLLSRVSTVKKKMKHLHDCEALFIKQTKSRLLFMNRLQGIRDMESADFLDWSRVRLNRLVADYMMANGYHGAAALLCKDSQLENLVDLGIYKRYQLIHDSILQQELKEVLSWCSEHRAILKKNNSTLELEVRLQRFIELIKSKKLCQAIAFAKAHFGTWANEHPARLQLAAALLAFPEFTNGSPYSLLLSDDRWEYLASLFTSNFTAVHNIPSVPLLHALLAAGLSSLKTPLCYLDANDDNPLALQSQTVKQCPVCTPCLNDLGKALPYAHITQSAIVDSLTGEGLDSDNCPVAFPNGRVYGIQSLISWNEANGTREGFLRDPYSGKEFPFQLLRKVYVV</sequence>
<organism>
    <name type="scientific">Schizosaccharomyces pombe (strain 972 / ATCC 24843)</name>
    <name type="common">Fission yeast</name>
    <dbReference type="NCBI Taxonomy" id="284812"/>
    <lineage>
        <taxon>Eukaryota</taxon>
        <taxon>Fungi</taxon>
        <taxon>Dikarya</taxon>
        <taxon>Ascomycota</taxon>
        <taxon>Taphrinomycotina</taxon>
        <taxon>Schizosaccharomycetes</taxon>
        <taxon>Schizosaccharomycetales</taxon>
        <taxon>Schizosaccharomycetaceae</taxon>
        <taxon>Schizosaccharomyces</taxon>
    </lineage>
</organism>
<proteinExistence type="inferred from homology"/>